<feature type="chain" id="PRO_0000251702" description="Large ribosomal subunit protein uL16c">
    <location>
        <begin position="1"/>
        <end position="135"/>
    </location>
</feature>
<protein>
    <recommendedName>
        <fullName evidence="1">Large ribosomal subunit protein uL16c</fullName>
    </recommendedName>
    <alternativeName>
        <fullName evidence="2">50S ribosomal protein L16, chloroplastic</fullName>
    </alternativeName>
</protein>
<geneLocation type="chloroplast"/>
<dbReference type="EMBL" id="DQ424856">
    <property type="protein sequence ID" value="ABE47571.1"/>
    <property type="molecule type" value="Genomic_DNA"/>
</dbReference>
<dbReference type="RefSeq" id="YP_002608401.1">
    <property type="nucleotide sequence ID" value="NC_012119.1"/>
</dbReference>
<dbReference type="RefSeq" id="YP_567115.1">
    <property type="nucleotide sequence ID" value="NC_007957.1"/>
</dbReference>
<dbReference type="SMR" id="Q0ZIY1"/>
<dbReference type="FunCoup" id="Q0ZIY1">
    <property type="interactions" value="944"/>
</dbReference>
<dbReference type="STRING" id="29760.Q0ZIY1"/>
<dbReference type="GeneID" id="4025020"/>
<dbReference type="GeneID" id="7498629"/>
<dbReference type="KEGG" id="vvi:4025020"/>
<dbReference type="KEGG" id="vvi:7498629"/>
<dbReference type="InParanoid" id="Q0ZIY1"/>
<dbReference type="OrthoDB" id="846899at71240"/>
<dbReference type="Proteomes" id="UP000009183">
    <property type="component" value="Chloroplast"/>
</dbReference>
<dbReference type="GO" id="GO:0009507">
    <property type="term" value="C:chloroplast"/>
    <property type="evidence" value="ECO:0007669"/>
    <property type="project" value="UniProtKB-SubCell"/>
</dbReference>
<dbReference type="GO" id="GO:0005762">
    <property type="term" value="C:mitochondrial large ribosomal subunit"/>
    <property type="evidence" value="ECO:0000318"/>
    <property type="project" value="GO_Central"/>
</dbReference>
<dbReference type="GO" id="GO:0019843">
    <property type="term" value="F:rRNA binding"/>
    <property type="evidence" value="ECO:0000318"/>
    <property type="project" value="GO_Central"/>
</dbReference>
<dbReference type="GO" id="GO:0003735">
    <property type="term" value="F:structural constituent of ribosome"/>
    <property type="evidence" value="ECO:0000318"/>
    <property type="project" value="GO_Central"/>
</dbReference>
<dbReference type="GO" id="GO:0032543">
    <property type="term" value="P:mitochondrial translation"/>
    <property type="evidence" value="ECO:0000318"/>
    <property type="project" value="GO_Central"/>
</dbReference>
<dbReference type="CDD" id="cd01433">
    <property type="entry name" value="Ribosomal_L16_L10e"/>
    <property type="match status" value="1"/>
</dbReference>
<dbReference type="FunFam" id="3.90.1170.10:FF:000001">
    <property type="entry name" value="50S ribosomal protein L16"/>
    <property type="match status" value="1"/>
</dbReference>
<dbReference type="Gene3D" id="3.90.1170.10">
    <property type="entry name" value="Ribosomal protein L10e/L16"/>
    <property type="match status" value="1"/>
</dbReference>
<dbReference type="HAMAP" id="MF_01342">
    <property type="entry name" value="Ribosomal_uL16"/>
    <property type="match status" value="1"/>
</dbReference>
<dbReference type="InterPro" id="IPR047873">
    <property type="entry name" value="Ribosomal_uL16"/>
</dbReference>
<dbReference type="InterPro" id="IPR000114">
    <property type="entry name" value="Ribosomal_uL16_bact-type"/>
</dbReference>
<dbReference type="InterPro" id="IPR020798">
    <property type="entry name" value="Ribosomal_uL16_CS"/>
</dbReference>
<dbReference type="InterPro" id="IPR016180">
    <property type="entry name" value="Ribosomal_uL16_dom"/>
</dbReference>
<dbReference type="InterPro" id="IPR036920">
    <property type="entry name" value="Ribosomal_uL16_sf"/>
</dbReference>
<dbReference type="NCBIfam" id="TIGR01164">
    <property type="entry name" value="rplP_bact"/>
    <property type="match status" value="1"/>
</dbReference>
<dbReference type="PANTHER" id="PTHR12220">
    <property type="entry name" value="50S/60S RIBOSOMAL PROTEIN L16"/>
    <property type="match status" value="1"/>
</dbReference>
<dbReference type="PANTHER" id="PTHR12220:SF13">
    <property type="entry name" value="LARGE RIBOSOMAL SUBUNIT PROTEIN UL16M"/>
    <property type="match status" value="1"/>
</dbReference>
<dbReference type="Pfam" id="PF00252">
    <property type="entry name" value="Ribosomal_L16"/>
    <property type="match status" value="1"/>
</dbReference>
<dbReference type="PRINTS" id="PR00060">
    <property type="entry name" value="RIBOSOMALL16"/>
</dbReference>
<dbReference type="SUPFAM" id="SSF54686">
    <property type="entry name" value="Ribosomal protein L16p/L10e"/>
    <property type="match status" value="1"/>
</dbReference>
<dbReference type="PROSITE" id="PS00586">
    <property type="entry name" value="RIBOSOMAL_L16_1"/>
    <property type="match status" value="1"/>
</dbReference>
<dbReference type="PROSITE" id="PS00701">
    <property type="entry name" value="RIBOSOMAL_L16_2"/>
    <property type="match status" value="1"/>
</dbReference>
<keyword id="KW-0150">Chloroplast</keyword>
<keyword id="KW-0934">Plastid</keyword>
<keyword id="KW-1185">Reference proteome</keyword>
<keyword id="KW-0687">Ribonucleoprotein</keyword>
<keyword id="KW-0689">Ribosomal protein</keyword>
<proteinExistence type="inferred from homology"/>
<reference key="1">
    <citation type="journal article" date="2006" name="BMC Evol. Biol.">
        <title>Phylogenetic analyses of Vitis (Vitaceae) based on complete chloroplast genome sequences: effects of taxon sampling and phylogenetic methods on resolving relationships among rosids.</title>
        <authorList>
            <person name="Jansen R.K."/>
            <person name="Kaittanis C."/>
            <person name="Lee S.-B."/>
            <person name="Saski C."/>
            <person name="Tomkins J."/>
            <person name="Alverson A.J."/>
            <person name="Daniell H."/>
        </authorList>
    </citation>
    <scope>NUCLEOTIDE SEQUENCE [LARGE SCALE GENOMIC DNA]</scope>
    <source>
        <strain>cv. Maxxa</strain>
    </source>
</reference>
<sequence>MLSPKRTRFRKQHRGRMKGISYRGNRICFGRYALQALEPAWITSRQIEAGRRAMTRNVRRGGKIWVRIFPDKPVTVRPTETRMGSGKGSPEYWVAVVKPGRILYEMGGVAENIARKAISIAASKMPIRTQFIISG</sequence>
<accession>Q0ZIY1</accession>
<comment type="subunit">
    <text evidence="1">Part of the 50S ribosomal subunit.</text>
</comment>
<comment type="subcellular location">
    <subcellularLocation>
        <location>Plastid</location>
        <location>Chloroplast</location>
    </subcellularLocation>
</comment>
<comment type="similarity">
    <text evidence="1">Belongs to the universal ribosomal protein uL16 family.</text>
</comment>
<evidence type="ECO:0000255" key="1">
    <source>
        <dbReference type="HAMAP-Rule" id="MF_01342"/>
    </source>
</evidence>
<evidence type="ECO:0000305" key="2"/>
<organism>
    <name type="scientific">Vitis vinifera</name>
    <name type="common">Grape</name>
    <dbReference type="NCBI Taxonomy" id="29760"/>
    <lineage>
        <taxon>Eukaryota</taxon>
        <taxon>Viridiplantae</taxon>
        <taxon>Streptophyta</taxon>
        <taxon>Embryophyta</taxon>
        <taxon>Tracheophyta</taxon>
        <taxon>Spermatophyta</taxon>
        <taxon>Magnoliopsida</taxon>
        <taxon>eudicotyledons</taxon>
        <taxon>Gunneridae</taxon>
        <taxon>Pentapetalae</taxon>
        <taxon>rosids</taxon>
        <taxon>Vitales</taxon>
        <taxon>Vitaceae</taxon>
        <taxon>Viteae</taxon>
        <taxon>Vitis</taxon>
    </lineage>
</organism>
<gene>
    <name evidence="1" type="primary">rpl16</name>
</gene>
<name>RK16_VITVI</name>